<proteinExistence type="inferred from homology"/>
<name>NUOI_AROAE</name>
<gene>
    <name evidence="1" type="primary">nuoI</name>
    <name type="ordered locus">AZOSEA27470</name>
    <name type="ORF">ebA4843</name>
</gene>
<evidence type="ECO:0000255" key="1">
    <source>
        <dbReference type="HAMAP-Rule" id="MF_01351"/>
    </source>
</evidence>
<protein>
    <recommendedName>
        <fullName evidence="1">NADH-quinone oxidoreductase subunit I</fullName>
        <ecNumber evidence="1">7.1.1.-</ecNumber>
    </recommendedName>
    <alternativeName>
        <fullName evidence="1">NADH dehydrogenase I subunit I</fullName>
    </alternativeName>
    <alternativeName>
        <fullName evidence="1">NDH-1 subunit I</fullName>
    </alternativeName>
</protein>
<dbReference type="EC" id="7.1.1.-" evidence="1"/>
<dbReference type="EMBL" id="CR555306">
    <property type="protein sequence ID" value="CAI08872.1"/>
    <property type="molecule type" value="Genomic_DNA"/>
</dbReference>
<dbReference type="RefSeq" id="WP_011238555.1">
    <property type="nucleotide sequence ID" value="NC_006513.1"/>
</dbReference>
<dbReference type="SMR" id="Q5P1E2"/>
<dbReference type="STRING" id="76114.ebA4843"/>
<dbReference type="KEGG" id="eba:ebA4843"/>
<dbReference type="eggNOG" id="COG1143">
    <property type="taxonomic scope" value="Bacteria"/>
</dbReference>
<dbReference type="HOGENOM" id="CLU_067218_5_1_4"/>
<dbReference type="OrthoDB" id="9808559at2"/>
<dbReference type="Proteomes" id="UP000006552">
    <property type="component" value="Chromosome"/>
</dbReference>
<dbReference type="GO" id="GO:0005886">
    <property type="term" value="C:plasma membrane"/>
    <property type="evidence" value="ECO:0007669"/>
    <property type="project" value="UniProtKB-SubCell"/>
</dbReference>
<dbReference type="GO" id="GO:0051539">
    <property type="term" value="F:4 iron, 4 sulfur cluster binding"/>
    <property type="evidence" value="ECO:0007669"/>
    <property type="project" value="UniProtKB-KW"/>
</dbReference>
<dbReference type="GO" id="GO:0005506">
    <property type="term" value="F:iron ion binding"/>
    <property type="evidence" value="ECO:0007669"/>
    <property type="project" value="UniProtKB-UniRule"/>
</dbReference>
<dbReference type="GO" id="GO:0050136">
    <property type="term" value="F:NADH:ubiquinone reductase (non-electrogenic) activity"/>
    <property type="evidence" value="ECO:0007669"/>
    <property type="project" value="UniProtKB-UniRule"/>
</dbReference>
<dbReference type="GO" id="GO:0048038">
    <property type="term" value="F:quinone binding"/>
    <property type="evidence" value="ECO:0007669"/>
    <property type="project" value="UniProtKB-KW"/>
</dbReference>
<dbReference type="GO" id="GO:0009060">
    <property type="term" value="P:aerobic respiration"/>
    <property type="evidence" value="ECO:0007669"/>
    <property type="project" value="TreeGrafter"/>
</dbReference>
<dbReference type="FunFam" id="3.30.70.3270:FF:000003">
    <property type="entry name" value="NADH-quinone oxidoreductase subunit I"/>
    <property type="match status" value="1"/>
</dbReference>
<dbReference type="Gene3D" id="3.30.70.3270">
    <property type="match status" value="1"/>
</dbReference>
<dbReference type="HAMAP" id="MF_01351">
    <property type="entry name" value="NDH1_NuoI"/>
    <property type="match status" value="1"/>
</dbReference>
<dbReference type="InterPro" id="IPR017896">
    <property type="entry name" value="4Fe4S_Fe-S-bd"/>
</dbReference>
<dbReference type="InterPro" id="IPR017900">
    <property type="entry name" value="4Fe4S_Fe_S_CS"/>
</dbReference>
<dbReference type="InterPro" id="IPR010226">
    <property type="entry name" value="NADH_quinone_OxRdtase_chainI"/>
</dbReference>
<dbReference type="NCBIfam" id="TIGR01971">
    <property type="entry name" value="NuoI"/>
    <property type="match status" value="1"/>
</dbReference>
<dbReference type="NCBIfam" id="NF004538">
    <property type="entry name" value="PRK05888.1-4"/>
    <property type="match status" value="1"/>
</dbReference>
<dbReference type="NCBIfam" id="NF004539">
    <property type="entry name" value="PRK05888.1-5"/>
    <property type="match status" value="1"/>
</dbReference>
<dbReference type="PANTHER" id="PTHR10849:SF20">
    <property type="entry name" value="NADH DEHYDROGENASE [UBIQUINONE] IRON-SULFUR PROTEIN 8, MITOCHONDRIAL"/>
    <property type="match status" value="1"/>
</dbReference>
<dbReference type="PANTHER" id="PTHR10849">
    <property type="entry name" value="NADH DEHYDROGENASE UBIQUINONE IRON-SULFUR PROTEIN 8, MITOCHONDRIAL"/>
    <property type="match status" value="1"/>
</dbReference>
<dbReference type="Pfam" id="PF12838">
    <property type="entry name" value="Fer4_7"/>
    <property type="match status" value="1"/>
</dbReference>
<dbReference type="SUPFAM" id="SSF54862">
    <property type="entry name" value="4Fe-4S ferredoxins"/>
    <property type="match status" value="1"/>
</dbReference>
<dbReference type="PROSITE" id="PS00198">
    <property type="entry name" value="4FE4S_FER_1"/>
    <property type="match status" value="2"/>
</dbReference>
<dbReference type="PROSITE" id="PS51379">
    <property type="entry name" value="4FE4S_FER_2"/>
    <property type="match status" value="2"/>
</dbReference>
<sequence length="161" mass="18305">MGAKDYIGSLFLTELIKGLALTGRHLFARKITVQFPEEKTPASPRFRGLHALRRYPNGEERCIACKLCEAVCPALAITIESEQRDDGSRRTKRYDIDLTKCIFCGFCEEACPVDAVVETRVMEYHGEKRGDLYYTKQMLLAVGDRYEAQIAADREADAKYR</sequence>
<keyword id="KW-0004">4Fe-4S</keyword>
<keyword id="KW-0997">Cell inner membrane</keyword>
<keyword id="KW-1003">Cell membrane</keyword>
<keyword id="KW-0408">Iron</keyword>
<keyword id="KW-0411">Iron-sulfur</keyword>
<keyword id="KW-0472">Membrane</keyword>
<keyword id="KW-0479">Metal-binding</keyword>
<keyword id="KW-0520">NAD</keyword>
<keyword id="KW-0874">Quinone</keyword>
<keyword id="KW-1185">Reference proteome</keyword>
<keyword id="KW-0677">Repeat</keyword>
<keyword id="KW-1278">Translocase</keyword>
<keyword id="KW-0830">Ubiquinone</keyword>
<accession>Q5P1E2</accession>
<reference key="1">
    <citation type="journal article" date="2005" name="Arch. Microbiol.">
        <title>The genome sequence of an anaerobic aromatic-degrading denitrifying bacterium, strain EbN1.</title>
        <authorList>
            <person name="Rabus R."/>
            <person name="Kube M."/>
            <person name="Heider J."/>
            <person name="Beck A."/>
            <person name="Heitmann K."/>
            <person name="Widdel F."/>
            <person name="Reinhardt R."/>
        </authorList>
    </citation>
    <scope>NUCLEOTIDE SEQUENCE [LARGE SCALE GENOMIC DNA]</scope>
    <source>
        <strain>DSM 19018 / LMG 30748 / EbN1</strain>
    </source>
</reference>
<feature type="chain" id="PRO_0000250876" description="NADH-quinone oxidoreductase subunit I">
    <location>
        <begin position="1"/>
        <end position="161"/>
    </location>
</feature>
<feature type="domain" description="4Fe-4S ferredoxin-type 1" evidence="1">
    <location>
        <begin position="52"/>
        <end position="82"/>
    </location>
</feature>
<feature type="domain" description="4Fe-4S ferredoxin-type 2" evidence="1">
    <location>
        <begin position="92"/>
        <end position="121"/>
    </location>
</feature>
<feature type="binding site" evidence="1">
    <location>
        <position position="62"/>
    </location>
    <ligand>
        <name>[4Fe-4S] cluster</name>
        <dbReference type="ChEBI" id="CHEBI:49883"/>
        <label>1</label>
    </ligand>
</feature>
<feature type="binding site" evidence="1">
    <location>
        <position position="65"/>
    </location>
    <ligand>
        <name>[4Fe-4S] cluster</name>
        <dbReference type="ChEBI" id="CHEBI:49883"/>
        <label>1</label>
    </ligand>
</feature>
<feature type="binding site" evidence="1">
    <location>
        <position position="68"/>
    </location>
    <ligand>
        <name>[4Fe-4S] cluster</name>
        <dbReference type="ChEBI" id="CHEBI:49883"/>
        <label>1</label>
    </ligand>
</feature>
<feature type="binding site" evidence="1">
    <location>
        <position position="72"/>
    </location>
    <ligand>
        <name>[4Fe-4S] cluster</name>
        <dbReference type="ChEBI" id="CHEBI:49883"/>
        <label>2</label>
    </ligand>
</feature>
<feature type="binding site" evidence="1">
    <location>
        <position position="101"/>
    </location>
    <ligand>
        <name>[4Fe-4S] cluster</name>
        <dbReference type="ChEBI" id="CHEBI:49883"/>
        <label>2</label>
    </ligand>
</feature>
<feature type="binding site" evidence="1">
    <location>
        <position position="104"/>
    </location>
    <ligand>
        <name>[4Fe-4S] cluster</name>
        <dbReference type="ChEBI" id="CHEBI:49883"/>
        <label>2</label>
    </ligand>
</feature>
<feature type="binding site" evidence="1">
    <location>
        <position position="107"/>
    </location>
    <ligand>
        <name>[4Fe-4S] cluster</name>
        <dbReference type="ChEBI" id="CHEBI:49883"/>
        <label>2</label>
    </ligand>
</feature>
<feature type="binding site" evidence="1">
    <location>
        <position position="111"/>
    </location>
    <ligand>
        <name>[4Fe-4S] cluster</name>
        <dbReference type="ChEBI" id="CHEBI:49883"/>
        <label>1</label>
    </ligand>
</feature>
<comment type="function">
    <text evidence="1">NDH-1 shuttles electrons from NADH, via FMN and iron-sulfur (Fe-S) centers, to quinones in the respiratory chain. The immediate electron acceptor for the enzyme in this species is believed to be ubiquinone. Couples the redox reaction to proton translocation (for every two electrons transferred, four hydrogen ions are translocated across the cytoplasmic membrane), and thus conserves the redox energy in a proton gradient.</text>
</comment>
<comment type="catalytic activity">
    <reaction evidence="1">
        <text>a quinone + NADH + 5 H(+)(in) = a quinol + NAD(+) + 4 H(+)(out)</text>
        <dbReference type="Rhea" id="RHEA:57888"/>
        <dbReference type="ChEBI" id="CHEBI:15378"/>
        <dbReference type="ChEBI" id="CHEBI:24646"/>
        <dbReference type="ChEBI" id="CHEBI:57540"/>
        <dbReference type="ChEBI" id="CHEBI:57945"/>
        <dbReference type="ChEBI" id="CHEBI:132124"/>
    </reaction>
</comment>
<comment type="cofactor">
    <cofactor evidence="1">
        <name>[4Fe-4S] cluster</name>
        <dbReference type="ChEBI" id="CHEBI:49883"/>
    </cofactor>
    <text evidence="1">Binds 2 [4Fe-4S] clusters per subunit.</text>
</comment>
<comment type="subunit">
    <text evidence="1">NDH-1 is composed of 14 different subunits. Subunits NuoA, H, J, K, L, M, N constitute the membrane sector of the complex.</text>
</comment>
<comment type="subcellular location">
    <subcellularLocation>
        <location evidence="1">Cell inner membrane</location>
        <topology evidence="1">Peripheral membrane protein</topology>
    </subcellularLocation>
</comment>
<comment type="similarity">
    <text evidence="1">Belongs to the complex I 23 kDa subunit family.</text>
</comment>
<organism>
    <name type="scientific">Aromatoleum aromaticum (strain DSM 19018 / LMG 30748 / EbN1)</name>
    <name type="common">Azoarcus sp. (strain EbN1)</name>
    <dbReference type="NCBI Taxonomy" id="76114"/>
    <lineage>
        <taxon>Bacteria</taxon>
        <taxon>Pseudomonadati</taxon>
        <taxon>Pseudomonadota</taxon>
        <taxon>Betaproteobacteria</taxon>
        <taxon>Rhodocyclales</taxon>
        <taxon>Rhodocyclaceae</taxon>
        <taxon>Aromatoleum</taxon>
    </lineage>
</organism>